<name>GCST_BURM7</name>
<protein>
    <recommendedName>
        <fullName evidence="1">Aminomethyltransferase</fullName>
        <ecNumber evidence="1">2.1.2.10</ecNumber>
    </recommendedName>
    <alternativeName>
        <fullName evidence="1">Glycine cleavage system T protein</fullName>
    </alternativeName>
</protein>
<feature type="chain" id="PRO_1000047648" description="Aminomethyltransferase">
    <location>
        <begin position="1"/>
        <end position="372"/>
    </location>
</feature>
<organism>
    <name type="scientific">Burkholderia mallei (strain NCTC 10247)</name>
    <dbReference type="NCBI Taxonomy" id="320389"/>
    <lineage>
        <taxon>Bacteria</taxon>
        <taxon>Pseudomonadati</taxon>
        <taxon>Pseudomonadota</taxon>
        <taxon>Betaproteobacteria</taxon>
        <taxon>Burkholderiales</taxon>
        <taxon>Burkholderiaceae</taxon>
        <taxon>Burkholderia</taxon>
        <taxon>pseudomallei group</taxon>
    </lineage>
</organism>
<reference key="1">
    <citation type="journal article" date="2010" name="Genome Biol. Evol.">
        <title>Continuing evolution of Burkholderia mallei through genome reduction and large-scale rearrangements.</title>
        <authorList>
            <person name="Losada L."/>
            <person name="Ronning C.M."/>
            <person name="DeShazer D."/>
            <person name="Woods D."/>
            <person name="Fedorova N."/>
            <person name="Kim H.S."/>
            <person name="Shabalina S.A."/>
            <person name="Pearson T.R."/>
            <person name="Brinkac L."/>
            <person name="Tan P."/>
            <person name="Nandi T."/>
            <person name="Crabtree J."/>
            <person name="Badger J."/>
            <person name="Beckstrom-Sternberg S."/>
            <person name="Saqib M."/>
            <person name="Schutzer S.E."/>
            <person name="Keim P."/>
            <person name="Nierman W.C."/>
        </authorList>
    </citation>
    <scope>NUCLEOTIDE SEQUENCE [LARGE SCALE GENOMIC DNA]</scope>
    <source>
        <strain>NCTC 10247</strain>
    </source>
</reference>
<dbReference type="EC" id="2.1.2.10" evidence="1"/>
<dbReference type="EMBL" id="CP000548">
    <property type="protein sequence ID" value="ABO05142.1"/>
    <property type="molecule type" value="Genomic_DNA"/>
</dbReference>
<dbReference type="RefSeq" id="WP_004202927.1">
    <property type="nucleotide sequence ID" value="NZ_CP007802.1"/>
</dbReference>
<dbReference type="SMR" id="A3MQP5"/>
<dbReference type="GeneID" id="93061983"/>
<dbReference type="KEGG" id="bmaz:BM44_296"/>
<dbReference type="KEGG" id="bmn:BMA10247_3061"/>
<dbReference type="PATRIC" id="fig|320389.8.peg.322"/>
<dbReference type="GO" id="GO:0005829">
    <property type="term" value="C:cytosol"/>
    <property type="evidence" value="ECO:0007669"/>
    <property type="project" value="TreeGrafter"/>
</dbReference>
<dbReference type="GO" id="GO:0005960">
    <property type="term" value="C:glycine cleavage complex"/>
    <property type="evidence" value="ECO:0007669"/>
    <property type="project" value="InterPro"/>
</dbReference>
<dbReference type="GO" id="GO:0004047">
    <property type="term" value="F:aminomethyltransferase activity"/>
    <property type="evidence" value="ECO:0007669"/>
    <property type="project" value="UniProtKB-UniRule"/>
</dbReference>
<dbReference type="GO" id="GO:0008483">
    <property type="term" value="F:transaminase activity"/>
    <property type="evidence" value="ECO:0007669"/>
    <property type="project" value="UniProtKB-KW"/>
</dbReference>
<dbReference type="GO" id="GO:0019464">
    <property type="term" value="P:glycine decarboxylation via glycine cleavage system"/>
    <property type="evidence" value="ECO:0007669"/>
    <property type="project" value="UniProtKB-UniRule"/>
</dbReference>
<dbReference type="FunFam" id="3.30.70.1400:FF:000001">
    <property type="entry name" value="Aminomethyltransferase"/>
    <property type="match status" value="1"/>
</dbReference>
<dbReference type="FunFam" id="4.10.1250.10:FF:000001">
    <property type="entry name" value="Aminomethyltransferase"/>
    <property type="match status" value="1"/>
</dbReference>
<dbReference type="Gene3D" id="2.40.30.110">
    <property type="entry name" value="Aminomethyltransferase beta-barrel domains"/>
    <property type="match status" value="1"/>
</dbReference>
<dbReference type="Gene3D" id="3.30.70.1400">
    <property type="entry name" value="Aminomethyltransferase beta-barrel domains"/>
    <property type="match status" value="1"/>
</dbReference>
<dbReference type="Gene3D" id="4.10.1250.10">
    <property type="entry name" value="Aminomethyltransferase fragment"/>
    <property type="match status" value="1"/>
</dbReference>
<dbReference type="Gene3D" id="3.30.1360.120">
    <property type="entry name" value="Probable tRNA modification gtpase trme, domain 1"/>
    <property type="match status" value="1"/>
</dbReference>
<dbReference type="HAMAP" id="MF_00259">
    <property type="entry name" value="GcvT"/>
    <property type="match status" value="1"/>
</dbReference>
<dbReference type="InterPro" id="IPR006223">
    <property type="entry name" value="GCS_T"/>
</dbReference>
<dbReference type="InterPro" id="IPR022903">
    <property type="entry name" value="GCS_T_bac"/>
</dbReference>
<dbReference type="InterPro" id="IPR013977">
    <property type="entry name" value="GCST_C"/>
</dbReference>
<dbReference type="InterPro" id="IPR006222">
    <property type="entry name" value="GCV_T_N"/>
</dbReference>
<dbReference type="InterPro" id="IPR028896">
    <property type="entry name" value="GcvT/YgfZ/DmdA"/>
</dbReference>
<dbReference type="InterPro" id="IPR029043">
    <property type="entry name" value="GcvT/YgfZ_C"/>
</dbReference>
<dbReference type="InterPro" id="IPR027266">
    <property type="entry name" value="TrmE/GcvT_dom1"/>
</dbReference>
<dbReference type="NCBIfam" id="TIGR00528">
    <property type="entry name" value="gcvT"/>
    <property type="match status" value="1"/>
</dbReference>
<dbReference type="NCBIfam" id="NF001567">
    <property type="entry name" value="PRK00389.1"/>
    <property type="match status" value="1"/>
</dbReference>
<dbReference type="PANTHER" id="PTHR43757">
    <property type="entry name" value="AMINOMETHYLTRANSFERASE"/>
    <property type="match status" value="1"/>
</dbReference>
<dbReference type="PANTHER" id="PTHR43757:SF2">
    <property type="entry name" value="AMINOMETHYLTRANSFERASE, MITOCHONDRIAL"/>
    <property type="match status" value="1"/>
</dbReference>
<dbReference type="Pfam" id="PF01571">
    <property type="entry name" value="GCV_T"/>
    <property type="match status" value="1"/>
</dbReference>
<dbReference type="Pfam" id="PF08669">
    <property type="entry name" value="GCV_T_C"/>
    <property type="match status" value="1"/>
</dbReference>
<dbReference type="PIRSF" id="PIRSF006487">
    <property type="entry name" value="GcvT"/>
    <property type="match status" value="1"/>
</dbReference>
<dbReference type="SUPFAM" id="SSF101790">
    <property type="entry name" value="Aminomethyltransferase beta-barrel domain"/>
    <property type="match status" value="1"/>
</dbReference>
<dbReference type="SUPFAM" id="SSF103025">
    <property type="entry name" value="Folate-binding domain"/>
    <property type="match status" value="1"/>
</dbReference>
<evidence type="ECO:0000255" key="1">
    <source>
        <dbReference type="HAMAP-Rule" id="MF_00259"/>
    </source>
</evidence>
<proteinExistence type="inferred from homology"/>
<sequence>MTVLKTTPLHAAHRALNARMVDFGGWDMPVNYGSQIEEHQAVRTDAGMFDVSHMCVVDFTGPRVRAFFEHAIANNVAKLQTPGKALYSCLLNPQGGVIDDLIVYYFTEEFFRVVVNAGTAEKDIAWFNQLNEQGGFGLTIAPRRDFAIVAAQGPNARAKVWDTVPCARAATSELKPFNAAQVAGTPFGDLTVARTGYTGEDGFEIIVPATHVEALWNALAERGVRPCGLGARDTLRLEAGMNLYGQDMDESVSPLDAGLAWTVDLSAPRAFVGRDALEAHGSRAAFVGLILQKENGRAGGVLRAHQKVATPHGEGEITSGTFSPSMQESIAFARVPKDVAIGDTVHVQIRDKQLPARVVKLPFVRNGKVLAA</sequence>
<comment type="function">
    <text evidence="1">The glycine cleavage system catalyzes the degradation of glycine.</text>
</comment>
<comment type="catalytic activity">
    <reaction evidence="1">
        <text>N(6)-[(R)-S(8)-aminomethyldihydrolipoyl]-L-lysyl-[protein] + (6S)-5,6,7,8-tetrahydrofolate = N(6)-[(R)-dihydrolipoyl]-L-lysyl-[protein] + (6R)-5,10-methylene-5,6,7,8-tetrahydrofolate + NH4(+)</text>
        <dbReference type="Rhea" id="RHEA:16945"/>
        <dbReference type="Rhea" id="RHEA-COMP:10475"/>
        <dbReference type="Rhea" id="RHEA-COMP:10492"/>
        <dbReference type="ChEBI" id="CHEBI:15636"/>
        <dbReference type="ChEBI" id="CHEBI:28938"/>
        <dbReference type="ChEBI" id="CHEBI:57453"/>
        <dbReference type="ChEBI" id="CHEBI:83100"/>
        <dbReference type="ChEBI" id="CHEBI:83143"/>
        <dbReference type="EC" id="2.1.2.10"/>
    </reaction>
</comment>
<comment type="subunit">
    <text evidence="1">The glycine cleavage system is composed of four proteins: P, T, L and H.</text>
</comment>
<comment type="similarity">
    <text evidence="1">Belongs to the GcvT family.</text>
</comment>
<keyword id="KW-0032">Aminotransferase</keyword>
<keyword id="KW-0808">Transferase</keyword>
<accession>A3MQP5</accession>
<gene>
    <name evidence="1" type="primary">gcvT</name>
    <name type="ordered locus">BMA10247_3061</name>
</gene>